<comment type="function">
    <text evidence="1">Probably deamidates glutamine residues to glutamate on methyl-accepting chemotaxis receptors (MCPs), playing an important role in chemotaxis.</text>
</comment>
<comment type="catalytic activity">
    <reaction evidence="1">
        <text>L-glutaminyl-[protein] + H2O = L-glutamyl-[protein] + NH4(+)</text>
        <dbReference type="Rhea" id="RHEA:16441"/>
        <dbReference type="Rhea" id="RHEA-COMP:10207"/>
        <dbReference type="Rhea" id="RHEA-COMP:10208"/>
        <dbReference type="ChEBI" id="CHEBI:15377"/>
        <dbReference type="ChEBI" id="CHEBI:28938"/>
        <dbReference type="ChEBI" id="CHEBI:29973"/>
        <dbReference type="ChEBI" id="CHEBI:30011"/>
        <dbReference type="EC" id="3.5.1.44"/>
    </reaction>
</comment>
<comment type="similarity">
    <text evidence="1">Belongs to the CheD family.</text>
</comment>
<sequence length="234" mass="25682">MSGLPIATNLYFDAHFHRHGVKLLPNEFYTTREDMVLVTVLGSCVAACLHDPIGRIGGMNHFMLPDDGADPSAAASESMRYGAYAMEVLINELIKAGGRRERFEAKVFGGAAVLAGMTTINIGDRNADFVRRYLALERIRITAEDLQGVHPRKVAFMPHTGQAMVKKLRVQAPDVAAREAALAREAVDPHGERAPRVRPRVELFGTPAPKAQAKPRIELFGMRATQPATRKQEA</sequence>
<dbReference type="EC" id="3.5.1.44" evidence="1"/>
<dbReference type="EMBL" id="CP000010">
    <property type="protein sequence ID" value="AAU48334.1"/>
    <property type="molecule type" value="Genomic_DNA"/>
</dbReference>
<dbReference type="RefSeq" id="WP_004198646.1">
    <property type="nucleotide sequence ID" value="NC_006348.1"/>
</dbReference>
<dbReference type="RefSeq" id="YP_104366.1">
    <property type="nucleotide sequence ID" value="NC_006348.1"/>
</dbReference>
<dbReference type="SMR" id="Q62G11"/>
<dbReference type="GeneID" id="92980525"/>
<dbReference type="KEGG" id="bma:BMA2855"/>
<dbReference type="PATRIC" id="fig|243160.12.peg.2926"/>
<dbReference type="eggNOG" id="COG1871">
    <property type="taxonomic scope" value="Bacteria"/>
</dbReference>
<dbReference type="HOGENOM" id="CLU_087854_0_0_4"/>
<dbReference type="Proteomes" id="UP000006693">
    <property type="component" value="Chromosome 1"/>
</dbReference>
<dbReference type="GO" id="GO:0050568">
    <property type="term" value="F:protein-glutamine glutaminase activity"/>
    <property type="evidence" value="ECO:0007669"/>
    <property type="project" value="UniProtKB-UniRule"/>
</dbReference>
<dbReference type="GO" id="GO:0006935">
    <property type="term" value="P:chemotaxis"/>
    <property type="evidence" value="ECO:0007669"/>
    <property type="project" value="UniProtKB-UniRule"/>
</dbReference>
<dbReference type="CDD" id="cd16352">
    <property type="entry name" value="CheD"/>
    <property type="match status" value="1"/>
</dbReference>
<dbReference type="Gene3D" id="3.30.1330.200">
    <property type="match status" value="1"/>
</dbReference>
<dbReference type="HAMAP" id="MF_01440">
    <property type="entry name" value="CheD"/>
    <property type="match status" value="1"/>
</dbReference>
<dbReference type="InterPro" id="IPR038592">
    <property type="entry name" value="CheD-like_sf"/>
</dbReference>
<dbReference type="InterPro" id="IPR005659">
    <property type="entry name" value="Chemorcpt_Glu_NH3ase_CheD"/>
</dbReference>
<dbReference type="InterPro" id="IPR011324">
    <property type="entry name" value="Cytotoxic_necrot_fac-like_cat"/>
</dbReference>
<dbReference type="NCBIfam" id="NF010013">
    <property type="entry name" value="PRK13487.1"/>
    <property type="match status" value="1"/>
</dbReference>
<dbReference type="NCBIfam" id="NF010014">
    <property type="entry name" value="PRK13489.1"/>
    <property type="match status" value="1"/>
</dbReference>
<dbReference type="PANTHER" id="PTHR35147">
    <property type="entry name" value="CHEMORECEPTOR GLUTAMINE DEAMIDASE CHED-RELATED"/>
    <property type="match status" value="1"/>
</dbReference>
<dbReference type="PANTHER" id="PTHR35147:SF2">
    <property type="entry name" value="CHEMORECEPTOR GLUTAMINE DEAMIDASE CHED-RELATED"/>
    <property type="match status" value="1"/>
</dbReference>
<dbReference type="Pfam" id="PF03975">
    <property type="entry name" value="CheD"/>
    <property type="match status" value="1"/>
</dbReference>
<dbReference type="SUPFAM" id="SSF64438">
    <property type="entry name" value="CNF1/YfiH-like putative cysteine hydrolases"/>
    <property type="match status" value="1"/>
</dbReference>
<evidence type="ECO:0000255" key="1">
    <source>
        <dbReference type="HAMAP-Rule" id="MF_01440"/>
    </source>
</evidence>
<name>CHED_BURMA</name>
<gene>
    <name evidence="1" type="primary">cheD</name>
    <name type="ordered locus">BMA2855</name>
</gene>
<keyword id="KW-0145">Chemotaxis</keyword>
<keyword id="KW-0378">Hydrolase</keyword>
<keyword id="KW-1185">Reference proteome</keyword>
<accession>Q62G11</accession>
<proteinExistence type="inferred from homology"/>
<reference key="1">
    <citation type="journal article" date="2004" name="Proc. Natl. Acad. Sci. U.S.A.">
        <title>Structural flexibility in the Burkholderia mallei genome.</title>
        <authorList>
            <person name="Nierman W.C."/>
            <person name="DeShazer D."/>
            <person name="Kim H.S."/>
            <person name="Tettelin H."/>
            <person name="Nelson K.E."/>
            <person name="Feldblyum T.V."/>
            <person name="Ulrich R.L."/>
            <person name="Ronning C.M."/>
            <person name="Brinkac L.M."/>
            <person name="Daugherty S.C."/>
            <person name="Davidsen T.D."/>
            <person name="DeBoy R.T."/>
            <person name="Dimitrov G."/>
            <person name="Dodson R.J."/>
            <person name="Durkin A.S."/>
            <person name="Gwinn M.L."/>
            <person name="Haft D.H."/>
            <person name="Khouri H.M."/>
            <person name="Kolonay J.F."/>
            <person name="Madupu R."/>
            <person name="Mohammoud Y."/>
            <person name="Nelson W.C."/>
            <person name="Radune D."/>
            <person name="Romero C.M."/>
            <person name="Sarria S."/>
            <person name="Selengut J."/>
            <person name="Shamblin C."/>
            <person name="Sullivan S.A."/>
            <person name="White O."/>
            <person name="Yu Y."/>
            <person name="Zafar N."/>
            <person name="Zhou L."/>
            <person name="Fraser C.M."/>
        </authorList>
    </citation>
    <scope>NUCLEOTIDE SEQUENCE [LARGE SCALE GENOMIC DNA]</scope>
    <source>
        <strain>ATCC 23344</strain>
    </source>
</reference>
<protein>
    <recommendedName>
        <fullName evidence="1">Probable chemoreceptor glutamine deamidase CheD</fullName>
        <ecNumber evidence="1">3.5.1.44</ecNumber>
    </recommendedName>
</protein>
<organism>
    <name type="scientific">Burkholderia mallei (strain ATCC 23344)</name>
    <dbReference type="NCBI Taxonomy" id="243160"/>
    <lineage>
        <taxon>Bacteria</taxon>
        <taxon>Pseudomonadati</taxon>
        <taxon>Pseudomonadota</taxon>
        <taxon>Betaproteobacteria</taxon>
        <taxon>Burkholderiales</taxon>
        <taxon>Burkholderiaceae</taxon>
        <taxon>Burkholderia</taxon>
        <taxon>pseudomallei group</taxon>
    </lineage>
</organism>
<feature type="chain" id="PRO_0000251013" description="Probable chemoreceptor glutamine deamidase CheD">
    <location>
        <begin position="1"/>
        <end position="234"/>
    </location>
</feature>